<protein>
    <recommendedName>
        <fullName>Cytochrome b</fullName>
    </recommendedName>
    <alternativeName>
        <fullName>Complex III subunit 3</fullName>
    </alternativeName>
    <alternativeName>
        <fullName>Complex III subunit III</fullName>
    </alternativeName>
    <alternativeName>
        <fullName>Cytochrome b-c1 complex subunit 3</fullName>
    </alternativeName>
    <alternativeName>
        <fullName>Ubiquinol-cytochrome-c reductase complex cytochrome b subunit</fullName>
    </alternativeName>
</protein>
<keyword id="KW-0249">Electron transport</keyword>
<keyword id="KW-0349">Heme</keyword>
<keyword id="KW-0408">Iron</keyword>
<keyword id="KW-0472">Membrane</keyword>
<keyword id="KW-0479">Metal-binding</keyword>
<keyword id="KW-0496">Mitochondrion</keyword>
<keyword id="KW-0999">Mitochondrion inner membrane</keyword>
<keyword id="KW-1185">Reference proteome</keyword>
<keyword id="KW-0679">Respiratory chain</keyword>
<keyword id="KW-0812">Transmembrane</keyword>
<keyword id="KW-1133">Transmembrane helix</keyword>
<keyword id="KW-0813">Transport</keyword>
<keyword id="KW-0830">Ubiquinone</keyword>
<sequence length="383" mass="43028">MRLRKTGLLAPVNDIIDLPTPSNISYWWNFGSLLGLCLGIQILTGVLLAMHYRSDVSLAFSSVAHIVRDVNYGWILRYVHANGASLFFICVYCHIGRGLYYGSYSRVLTWIVGVLIYFIMMLTAFIGYVLPWGQMSFWGATVITNLVSAIPSVGGSIVEWIWGGFSVSNCTLNRFFSLHYLLPFVLVGLVLAHLLTLHEKGANNPLGVVSLSDRSTFHVYFTIKDILGFLILLGVFVIIGIEPRIETLLQDPENFIQANPLVTPVHIQPEWYFLFAYAILRSIPNKLGGVLALFASILVLLLMPILDRSKIRSLTFNPVAKFFFWFIVGDFFILTWIGSAPAGTEPYVLIGRIATIFYFGYFLVLVPLLGYLSNLFYEYNGTT</sequence>
<proteinExistence type="inferred from homology"/>
<reference key="1">
    <citation type="journal article" date="2006" name="Proc. Natl. Acad. Sci. U.S.A.">
        <title>Mitochondrial genome of Trichoplax adhaerens supports placozoa as the basal lower metazoan phylum.</title>
        <authorList>
            <person name="Dellaporta S.L."/>
            <person name="Xu A."/>
            <person name="Sagasser S."/>
            <person name="Jakob W."/>
            <person name="Moreno M.A."/>
            <person name="Buss L.W."/>
            <person name="Schierwater B."/>
        </authorList>
    </citation>
    <scope>NUCLEOTIDE SEQUENCE [LARGE SCALE GENOMIC DNA]</scope>
    <source>
        <strain evidence="7">Grell-BS-1999</strain>
    </source>
</reference>
<feature type="chain" id="PRO_0000357466" description="Cytochrome b">
    <location>
        <begin position="1"/>
        <end position="383"/>
    </location>
</feature>
<feature type="transmembrane region" description="Helical" evidence="3">
    <location>
        <begin position="30"/>
        <end position="50"/>
    </location>
</feature>
<feature type="transmembrane region" description="Helical" evidence="3">
    <location>
        <begin position="74"/>
        <end position="96"/>
    </location>
</feature>
<feature type="transmembrane region" description="Helical" evidence="3">
    <location>
        <begin position="109"/>
        <end position="129"/>
    </location>
</feature>
<feature type="transmembrane region" description="Helical" evidence="3">
    <location>
        <begin position="175"/>
        <end position="195"/>
    </location>
</feature>
<feature type="transmembrane region" description="Helical" evidence="3">
    <location>
        <begin position="221"/>
        <end position="241"/>
    </location>
</feature>
<feature type="transmembrane region" description="Helical" evidence="4">
    <location>
        <begin position="289"/>
        <end position="309"/>
    </location>
</feature>
<feature type="transmembrane region" description="Helical" evidence="4">
    <location>
        <begin position="320"/>
        <end position="340"/>
    </location>
</feature>
<feature type="transmembrane region" description="Helical" evidence="4">
    <location>
        <begin position="345"/>
        <end position="365"/>
    </location>
</feature>
<feature type="binding site" description="axial binding residue" evidence="3">
    <location>
        <position position="80"/>
    </location>
    <ligand>
        <name>heme b</name>
        <dbReference type="ChEBI" id="CHEBI:60344"/>
        <label>b562</label>
    </ligand>
    <ligandPart>
        <name>Fe</name>
        <dbReference type="ChEBI" id="CHEBI:18248"/>
    </ligandPart>
</feature>
<feature type="binding site" description="axial binding residue" evidence="3">
    <location>
        <position position="94"/>
    </location>
    <ligand>
        <name>heme b</name>
        <dbReference type="ChEBI" id="CHEBI:60344"/>
        <label>b566</label>
    </ligand>
    <ligandPart>
        <name>Fe</name>
        <dbReference type="ChEBI" id="CHEBI:18248"/>
    </ligandPart>
</feature>
<feature type="binding site" description="axial binding residue" evidence="3">
    <location>
        <position position="179"/>
    </location>
    <ligand>
        <name>heme b</name>
        <dbReference type="ChEBI" id="CHEBI:60344"/>
        <label>b562</label>
    </ligand>
    <ligandPart>
        <name>Fe</name>
        <dbReference type="ChEBI" id="CHEBI:18248"/>
    </ligandPart>
</feature>
<feature type="binding site" description="axial binding residue" evidence="3">
    <location>
        <position position="193"/>
    </location>
    <ligand>
        <name>heme b</name>
        <dbReference type="ChEBI" id="CHEBI:60344"/>
        <label>b566</label>
    </ligand>
    <ligandPart>
        <name>Fe</name>
        <dbReference type="ChEBI" id="CHEBI:18248"/>
    </ligandPart>
</feature>
<feature type="binding site" evidence="2">
    <location>
        <position position="198"/>
    </location>
    <ligand>
        <name>a ubiquinone</name>
        <dbReference type="ChEBI" id="CHEBI:16389"/>
    </ligand>
</feature>
<evidence type="ECO:0000250" key="1"/>
<evidence type="ECO:0000250" key="2">
    <source>
        <dbReference type="UniProtKB" id="P00157"/>
    </source>
</evidence>
<evidence type="ECO:0000250" key="3">
    <source>
        <dbReference type="UniProtKB" id="P00163"/>
    </source>
</evidence>
<evidence type="ECO:0000255" key="4"/>
<evidence type="ECO:0000255" key="5">
    <source>
        <dbReference type="PROSITE-ProRule" id="PRU00967"/>
    </source>
</evidence>
<evidence type="ECO:0000255" key="6">
    <source>
        <dbReference type="PROSITE-ProRule" id="PRU00968"/>
    </source>
</evidence>
<evidence type="ECO:0000312" key="7">
    <source>
        <dbReference type="Proteomes" id="UP000009022"/>
    </source>
</evidence>
<geneLocation type="mitochondrion"/>
<organism>
    <name type="scientific">Trichoplax adhaerens</name>
    <name type="common">Trichoplax reptans</name>
    <dbReference type="NCBI Taxonomy" id="10228"/>
    <lineage>
        <taxon>Eukaryota</taxon>
        <taxon>Metazoa</taxon>
        <taxon>Placozoa</taxon>
        <taxon>Uniplacotomia</taxon>
        <taxon>Trichoplacea</taxon>
        <taxon>Trichoplacidae</taxon>
        <taxon>Trichoplax</taxon>
    </lineage>
</organism>
<accession>Q1AGX7</accession>
<comment type="function">
    <text evidence="3">Component of the ubiquinol-cytochrome c reductase complex (complex III or cytochrome b-c1 complex) that is part of the mitochondrial respiratory chain. The b-c1 complex mediates electron transfer from ubiquinol to cytochrome c. Contributes to the generation of a proton gradient across the mitochondrial membrane that is then used for ATP synthesis.</text>
</comment>
<comment type="cofactor">
    <cofactor evidence="3">
        <name>heme b</name>
        <dbReference type="ChEBI" id="CHEBI:60344"/>
    </cofactor>
    <text evidence="3">Binds 2 heme b groups non-covalently.</text>
</comment>
<comment type="subunit">
    <text evidence="1">The main subunits of complex b-c1 are: cytochrome b, cytochrome c1 and the Rieske protein.</text>
</comment>
<comment type="subcellular location">
    <subcellularLocation>
        <location evidence="3">Mitochondrion inner membrane</location>
        <topology evidence="3">Multi-pass membrane protein</topology>
    </subcellularLocation>
</comment>
<comment type="similarity">
    <text evidence="5 6">Belongs to the cytochrome b family.</text>
</comment>
<comment type="caution">
    <text evidence="3">The protein contains an even number of transmembrane helices, fewer than predicted by bioinformatics tools.</text>
</comment>
<name>CYB_TRIAD</name>
<dbReference type="EMBL" id="DQ112541">
    <property type="protein sequence ID" value="ABF48511.1"/>
    <property type="molecule type" value="Genomic_DNA"/>
</dbReference>
<dbReference type="RefSeq" id="YP_654083.1">
    <property type="nucleotide sequence ID" value="NC_008151.2"/>
</dbReference>
<dbReference type="SMR" id="Q1AGX7"/>
<dbReference type="FunCoup" id="Q1AGX7">
    <property type="interactions" value="109"/>
</dbReference>
<dbReference type="STRING" id="10228.Q1AGX7"/>
<dbReference type="GeneID" id="4126651"/>
<dbReference type="KEGG" id="tad:TradoM_p17"/>
<dbReference type="CTD" id="4519"/>
<dbReference type="InParanoid" id="Q1AGX7"/>
<dbReference type="PhylomeDB" id="Q1AGX7"/>
<dbReference type="Proteomes" id="UP000009022">
    <property type="component" value="Mitochondrion"/>
</dbReference>
<dbReference type="GO" id="GO:0016020">
    <property type="term" value="C:membrane"/>
    <property type="evidence" value="ECO:0000318"/>
    <property type="project" value="GO_Central"/>
</dbReference>
<dbReference type="GO" id="GO:0005743">
    <property type="term" value="C:mitochondrial inner membrane"/>
    <property type="evidence" value="ECO:0007669"/>
    <property type="project" value="UniProtKB-SubCell"/>
</dbReference>
<dbReference type="GO" id="GO:0045275">
    <property type="term" value="C:respiratory chain complex III"/>
    <property type="evidence" value="ECO:0000318"/>
    <property type="project" value="GO_Central"/>
</dbReference>
<dbReference type="GO" id="GO:0046872">
    <property type="term" value="F:metal ion binding"/>
    <property type="evidence" value="ECO:0007669"/>
    <property type="project" value="UniProtKB-KW"/>
</dbReference>
<dbReference type="GO" id="GO:0008121">
    <property type="term" value="F:ubiquinol-cytochrome-c reductase activity"/>
    <property type="evidence" value="ECO:0007669"/>
    <property type="project" value="InterPro"/>
</dbReference>
<dbReference type="GO" id="GO:0006122">
    <property type="term" value="P:mitochondrial electron transport, ubiquinol to cytochrome c"/>
    <property type="evidence" value="ECO:0000318"/>
    <property type="project" value="GO_Central"/>
</dbReference>
<dbReference type="CDD" id="cd00290">
    <property type="entry name" value="cytochrome_b_C"/>
    <property type="match status" value="1"/>
</dbReference>
<dbReference type="CDD" id="cd00284">
    <property type="entry name" value="Cytochrome_b_N"/>
    <property type="match status" value="1"/>
</dbReference>
<dbReference type="FunFam" id="1.20.810.10:FF:000004">
    <property type="entry name" value="Cytochrome b"/>
    <property type="match status" value="1"/>
</dbReference>
<dbReference type="Gene3D" id="1.20.810.10">
    <property type="entry name" value="Cytochrome Bc1 Complex, Chain C"/>
    <property type="match status" value="1"/>
</dbReference>
<dbReference type="InterPro" id="IPR005798">
    <property type="entry name" value="Cyt_b/b6_C"/>
</dbReference>
<dbReference type="InterPro" id="IPR036150">
    <property type="entry name" value="Cyt_b/b6_C_sf"/>
</dbReference>
<dbReference type="InterPro" id="IPR005797">
    <property type="entry name" value="Cyt_b/b6_N"/>
</dbReference>
<dbReference type="InterPro" id="IPR027387">
    <property type="entry name" value="Cytb/b6-like_sf"/>
</dbReference>
<dbReference type="InterPro" id="IPR030689">
    <property type="entry name" value="Cytochrome_b"/>
</dbReference>
<dbReference type="InterPro" id="IPR048260">
    <property type="entry name" value="Cytochrome_b_C_euk/bac"/>
</dbReference>
<dbReference type="InterPro" id="IPR048259">
    <property type="entry name" value="Cytochrome_b_N_euk/bac"/>
</dbReference>
<dbReference type="InterPro" id="IPR016174">
    <property type="entry name" value="Di-haem_cyt_TM"/>
</dbReference>
<dbReference type="PANTHER" id="PTHR19271">
    <property type="entry name" value="CYTOCHROME B"/>
    <property type="match status" value="1"/>
</dbReference>
<dbReference type="PANTHER" id="PTHR19271:SF16">
    <property type="entry name" value="CYTOCHROME B"/>
    <property type="match status" value="1"/>
</dbReference>
<dbReference type="Pfam" id="PF00032">
    <property type="entry name" value="Cytochrom_B_C"/>
    <property type="match status" value="1"/>
</dbReference>
<dbReference type="Pfam" id="PF00033">
    <property type="entry name" value="Cytochrome_B"/>
    <property type="match status" value="1"/>
</dbReference>
<dbReference type="PIRSF" id="PIRSF038885">
    <property type="entry name" value="COB"/>
    <property type="match status" value="1"/>
</dbReference>
<dbReference type="SUPFAM" id="SSF81648">
    <property type="entry name" value="a domain/subunit of cytochrome bc1 complex (Ubiquinol-cytochrome c reductase)"/>
    <property type="match status" value="1"/>
</dbReference>
<dbReference type="SUPFAM" id="SSF81342">
    <property type="entry name" value="Transmembrane di-heme cytochromes"/>
    <property type="match status" value="1"/>
</dbReference>
<dbReference type="PROSITE" id="PS51003">
    <property type="entry name" value="CYTB_CTER"/>
    <property type="match status" value="1"/>
</dbReference>
<dbReference type="PROSITE" id="PS51002">
    <property type="entry name" value="CYTB_NTER"/>
    <property type="match status" value="1"/>
</dbReference>
<gene>
    <name type="primary">mt:Cyt-b</name>
    <name type="synonym">Cob</name>
    <name type="synonym">cytb</name>
</gene>